<keyword id="KW-0030">Aminoacyl-tRNA synthetase</keyword>
<keyword id="KW-0067">ATP-binding</keyword>
<keyword id="KW-0963">Cytoplasm</keyword>
<keyword id="KW-0436">Ligase</keyword>
<keyword id="KW-0547">Nucleotide-binding</keyword>
<keyword id="KW-0648">Protein biosynthesis</keyword>
<reference key="1">
    <citation type="journal article" date="2006" name="Proc. Natl. Acad. Sci. U.S.A.">
        <title>Comparative genomics of the lactic acid bacteria.</title>
        <authorList>
            <person name="Makarova K.S."/>
            <person name="Slesarev A."/>
            <person name="Wolf Y.I."/>
            <person name="Sorokin A."/>
            <person name="Mirkin B."/>
            <person name="Koonin E.V."/>
            <person name="Pavlov A."/>
            <person name="Pavlova N."/>
            <person name="Karamychev V."/>
            <person name="Polouchine N."/>
            <person name="Shakhova V."/>
            <person name="Grigoriev I."/>
            <person name="Lou Y."/>
            <person name="Rohksar D."/>
            <person name="Lucas S."/>
            <person name="Huang K."/>
            <person name="Goodstein D.M."/>
            <person name="Hawkins T."/>
            <person name="Plengvidhya V."/>
            <person name="Welker D."/>
            <person name="Hughes J."/>
            <person name="Goh Y."/>
            <person name="Benson A."/>
            <person name="Baldwin K."/>
            <person name="Lee J.-H."/>
            <person name="Diaz-Muniz I."/>
            <person name="Dosti B."/>
            <person name="Smeianov V."/>
            <person name="Wechter W."/>
            <person name="Barabote R."/>
            <person name="Lorca G."/>
            <person name="Altermann E."/>
            <person name="Barrangou R."/>
            <person name="Ganesan B."/>
            <person name="Xie Y."/>
            <person name="Rawsthorne H."/>
            <person name="Tamir D."/>
            <person name="Parker C."/>
            <person name="Breidt F."/>
            <person name="Broadbent J.R."/>
            <person name="Hutkins R."/>
            <person name="O'Sullivan D."/>
            <person name="Steele J."/>
            <person name="Unlu G."/>
            <person name="Saier M.H. Jr."/>
            <person name="Klaenhammer T."/>
            <person name="Richardson P."/>
            <person name="Kozyavkin S."/>
            <person name="Weimer B.C."/>
            <person name="Mills D.A."/>
        </authorList>
    </citation>
    <scope>NUCLEOTIDE SEQUENCE [LARGE SCALE GENOMIC DNA]</scope>
    <source>
        <strain>ATCC 33323 / DSM 20243 / BCRC 14619 / CIP 102991 / JCM 1131 / KCTC 3163 / NCIMB 11718 / NCTC 13722 / AM63</strain>
    </source>
</reference>
<proteinExistence type="inferred from homology"/>
<dbReference type="EC" id="6.1.1.14" evidence="1"/>
<dbReference type="EMBL" id="CP000413">
    <property type="protein sequence ID" value="ABJ60487.1"/>
    <property type="molecule type" value="Genomic_DNA"/>
</dbReference>
<dbReference type="RefSeq" id="WP_003647187.1">
    <property type="nucleotide sequence ID" value="NZ_WBMG01000002.1"/>
</dbReference>
<dbReference type="SMR" id="Q042Y5"/>
<dbReference type="GeneID" id="29639365"/>
<dbReference type="KEGG" id="lga:LGAS_1115"/>
<dbReference type="HOGENOM" id="CLU_007220_2_2_9"/>
<dbReference type="BioCyc" id="LGAS324831:G1G6Y-1112-MONOMER"/>
<dbReference type="Proteomes" id="UP000000664">
    <property type="component" value="Chromosome"/>
</dbReference>
<dbReference type="GO" id="GO:0005829">
    <property type="term" value="C:cytosol"/>
    <property type="evidence" value="ECO:0007669"/>
    <property type="project" value="TreeGrafter"/>
</dbReference>
<dbReference type="GO" id="GO:0004814">
    <property type="term" value="F:arginine-tRNA ligase activity"/>
    <property type="evidence" value="ECO:0007669"/>
    <property type="project" value="InterPro"/>
</dbReference>
<dbReference type="GO" id="GO:0005524">
    <property type="term" value="F:ATP binding"/>
    <property type="evidence" value="ECO:0007669"/>
    <property type="project" value="UniProtKB-UniRule"/>
</dbReference>
<dbReference type="GO" id="GO:0004820">
    <property type="term" value="F:glycine-tRNA ligase activity"/>
    <property type="evidence" value="ECO:0007669"/>
    <property type="project" value="UniProtKB-UniRule"/>
</dbReference>
<dbReference type="GO" id="GO:0006420">
    <property type="term" value="P:arginyl-tRNA aminoacylation"/>
    <property type="evidence" value="ECO:0007669"/>
    <property type="project" value="InterPro"/>
</dbReference>
<dbReference type="GO" id="GO:0006426">
    <property type="term" value="P:glycyl-tRNA aminoacylation"/>
    <property type="evidence" value="ECO:0007669"/>
    <property type="project" value="UniProtKB-UniRule"/>
</dbReference>
<dbReference type="HAMAP" id="MF_00255">
    <property type="entry name" value="Gly_tRNA_synth_beta"/>
    <property type="match status" value="1"/>
</dbReference>
<dbReference type="InterPro" id="IPR008909">
    <property type="entry name" value="DALR_anticod-bd"/>
</dbReference>
<dbReference type="InterPro" id="IPR015944">
    <property type="entry name" value="Gly-tRNA-synth_bsu"/>
</dbReference>
<dbReference type="InterPro" id="IPR006194">
    <property type="entry name" value="Gly-tRNA-synth_heterodimer"/>
</dbReference>
<dbReference type="NCBIfam" id="TIGR00211">
    <property type="entry name" value="glyS"/>
    <property type="match status" value="1"/>
</dbReference>
<dbReference type="PANTHER" id="PTHR30075:SF2">
    <property type="entry name" value="GLYCINE--TRNA LIGASE, CHLOROPLASTIC_MITOCHONDRIAL 2"/>
    <property type="match status" value="1"/>
</dbReference>
<dbReference type="PANTHER" id="PTHR30075">
    <property type="entry name" value="GLYCYL-TRNA SYNTHETASE"/>
    <property type="match status" value="1"/>
</dbReference>
<dbReference type="Pfam" id="PF05746">
    <property type="entry name" value="DALR_1"/>
    <property type="match status" value="1"/>
</dbReference>
<dbReference type="Pfam" id="PF02092">
    <property type="entry name" value="tRNA_synt_2f"/>
    <property type="match status" value="1"/>
</dbReference>
<dbReference type="PRINTS" id="PR01045">
    <property type="entry name" value="TRNASYNTHGB"/>
</dbReference>
<dbReference type="SUPFAM" id="SSF109604">
    <property type="entry name" value="HD-domain/PDEase-like"/>
    <property type="match status" value="1"/>
</dbReference>
<dbReference type="PROSITE" id="PS50861">
    <property type="entry name" value="AA_TRNA_LIGASE_II_GLYAB"/>
    <property type="match status" value="1"/>
</dbReference>
<name>SYGB_LACGA</name>
<evidence type="ECO:0000255" key="1">
    <source>
        <dbReference type="HAMAP-Rule" id="MF_00255"/>
    </source>
</evidence>
<sequence>MTKDYLFEIGTEEMPAHVVSRSVKQLADRTKKYLKENGLSFKDIKTYSTPRRLTILVEDLAEKQDDIDEVKKGPAKKIAQDKDGNWTKAAQGFARGQGMTTDDIYFEELKGTEYAYVHVQKEGKKASDILMGMSDIIKAMTFPTKMRWDSNDFEFVRPIHWMVSLLGSEVVPVKLLDVVAGRKTQGHRFLGDSVVLANADDYEEALKSQYVIADADERKGMILNQIQELVAQHNWKVNIDKGLLEEVTNLVEYPTVFAGSFDEKYLNIPDEVLITSMKDNQRYFEVYDENGKLINHFIAVRNGNSEYLDNVIAGNEKVLVARLDDAQFFYDEDKKYPLAHFVDKLKNVSFHDKIGSVAEHMARVHIIGDYLGKKFNISETEMKDFDRVSDIYKFDLVTSMVGEFAELQGVMGMHYARLTGEDENVSVAIKESYMPTSAEGDLPSTTVGSLLSIADKLDTIISFFGAGMIPSSSNDPYALRRNAYGIVRILLNEGWSLPVKDVLPELIQLLSGKTAAKLPKDAEAENEIADFIRDRVKQQLQVEKYDYDVIDAVLASSQQDPIQILAAAKTLQMHHDDADFKPVVESLTRITNILKKAKYRNAAKVDESLFQDVSEEELNAGVNALEENTDLSIADLYKGFVELQPVINNYFESNMILDKDEKVKNNRLAQLLKVNNLADRMGDLSKLVIK</sequence>
<gene>
    <name evidence="1" type="primary">glyS</name>
    <name type="ordered locus">LGAS_1115</name>
</gene>
<protein>
    <recommendedName>
        <fullName evidence="1">Glycine--tRNA ligase beta subunit</fullName>
        <ecNumber evidence="1">6.1.1.14</ecNumber>
    </recommendedName>
    <alternativeName>
        <fullName evidence="1">Glycyl-tRNA synthetase beta subunit</fullName>
        <shortName evidence="1">GlyRS</shortName>
    </alternativeName>
</protein>
<comment type="catalytic activity">
    <reaction evidence="1">
        <text>tRNA(Gly) + glycine + ATP = glycyl-tRNA(Gly) + AMP + diphosphate</text>
        <dbReference type="Rhea" id="RHEA:16013"/>
        <dbReference type="Rhea" id="RHEA-COMP:9664"/>
        <dbReference type="Rhea" id="RHEA-COMP:9683"/>
        <dbReference type="ChEBI" id="CHEBI:30616"/>
        <dbReference type="ChEBI" id="CHEBI:33019"/>
        <dbReference type="ChEBI" id="CHEBI:57305"/>
        <dbReference type="ChEBI" id="CHEBI:78442"/>
        <dbReference type="ChEBI" id="CHEBI:78522"/>
        <dbReference type="ChEBI" id="CHEBI:456215"/>
        <dbReference type="EC" id="6.1.1.14"/>
    </reaction>
</comment>
<comment type="subunit">
    <text evidence="1">Tetramer of two alpha and two beta subunits.</text>
</comment>
<comment type="subcellular location">
    <subcellularLocation>
        <location evidence="1">Cytoplasm</location>
    </subcellularLocation>
</comment>
<comment type="similarity">
    <text evidence="1">Belongs to the class-II aminoacyl-tRNA synthetase family.</text>
</comment>
<organism>
    <name type="scientific">Lactobacillus gasseri (strain ATCC 33323 / DSM 20243 / BCRC 14619 / CIP 102991 / JCM 1131 / KCTC 3163 / NCIMB 11718 / NCTC 13722 / AM63)</name>
    <dbReference type="NCBI Taxonomy" id="324831"/>
    <lineage>
        <taxon>Bacteria</taxon>
        <taxon>Bacillati</taxon>
        <taxon>Bacillota</taxon>
        <taxon>Bacilli</taxon>
        <taxon>Lactobacillales</taxon>
        <taxon>Lactobacillaceae</taxon>
        <taxon>Lactobacillus</taxon>
    </lineage>
</organism>
<feature type="chain" id="PRO_1000006373" description="Glycine--tRNA ligase beta subunit">
    <location>
        <begin position="1"/>
        <end position="690"/>
    </location>
</feature>
<accession>Q042Y5</accession>